<keyword id="KW-0067">ATP-binding</keyword>
<keyword id="KW-0418">Kinase</keyword>
<keyword id="KW-0545">Nucleotide biosynthesis</keyword>
<keyword id="KW-0547">Nucleotide-binding</keyword>
<keyword id="KW-1185">Reference proteome</keyword>
<keyword id="KW-0808">Transferase</keyword>
<protein>
    <recommendedName>
        <fullName evidence="1">Thymidylate kinase</fullName>
        <ecNumber evidence="1">2.7.4.9</ecNumber>
    </recommendedName>
    <alternativeName>
        <fullName evidence="1">dTMP kinase</fullName>
    </alternativeName>
</protein>
<gene>
    <name evidence="1" type="primary">tmk</name>
    <name type="ordered locus">CT1313</name>
</gene>
<reference key="1">
    <citation type="journal article" date="2002" name="Proc. Natl. Acad. Sci. U.S.A.">
        <title>The complete genome sequence of Chlorobium tepidum TLS, a photosynthetic, anaerobic, green-sulfur bacterium.</title>
        <authorList>
            <person name="Eisen J.A."/>
            <person name="Nelson K.E."/>
            <person name="Paulsen I.T."/>
            <person name="Heidelberg J.F."/>
            <person name="Wu M."/>
            <person name="Dodson R.J."/>
            <person name="DeBoy R.T."/>
            <person name="Gwinn M.L."/>
            <person name="Nelson W.C."/>
            <person name="Haft D.H."/>
            <person name="Hickey E.K."/>
            <person name="Peterson J.D."/>
            <person name="Durkin A.S."/>
            <person name="Kolonay J.F."/>
            <person name="Yang F."/>
            <person name="Holt I.E."/>
            <person name="Umayam L.A."/>
            <person name="Mason T.M."/>
            <person name="Brenner M."/>
            <person name="Shea T.P."/>
            <person name="Parksey D.S."/>
            <person name="Nierman W.C."/>
            <person name="Feldblyum T.V."/>
            <person name="Hansen C.L."/>
            <person name="Craven M.B."/>
            <person name="Radune D."/>
            <person name="Vamathevan J.J."/>
            <person name="Khouri H.M."/>
            <person name="White O."/>
            <person name="Gruber T.M."/>
            <person name="Ketchum K.A."/>
            <person name="Venter J.C."/>
            <person name="Tettelin H."/>
            <person name="Bryant D.A."/>
            <person name="Fraser C.M."/>
        </authorList>
    </citation>
    <scope>NUCLEOTIDE SEQUENCE [LARGE SCALE GENOMIC DNA]</scope>
    <source>
        <strain>ATCC 49652 / DSM 12025 / NBRC 103806 / TLS</strain>
    </source>
</reference>
<organism>
    <name type="scientific">Chlorobaculum tepidum (strain ATCC 49652 / DSM 12025 / NBRC 103806 / TLS)</name>
    <name type="common">Chlorobium tepidum</name>
    <dbReference type="NCBI Taxonomy" id="194439"/>
    <lineage>
        <taxon>Bacteria</taxon>
        <taxon>Pseudomonadati</taxon>
        <taxon>Chlorobiota</taxon>
        <taxon>Chlorobiia</taxon>
        <taxon>Chlorobiales</taxon>
        <taxon>Chlorobiaceae</taxon>
        <taxon>Chlorobaculum</taxon>
    </lineage>
</organism>
<feature type="chain" id="PRO_0000155262" description="Thymidylate kinase">
    <location>
        <begin position="1"/>
        <end position="214"/>
    </location>
</feature>
<feature type="binding site" evidence="1">
    <location>
        <begin position="7"/>
        <end position="14"/>
    </location>
    <ligand>
        <name>ATP</name>
        <dbReference type="ChEBI" id="CHEBI:30616"/>
    </ligand>
</feature>
<name>KTHY_CHLTE</name>
<proteinExistence type="inferred from homology"/>
<evidence type="ECO:0000255" key="1">
    <source>
        <dbReference type="HAMAP-Rule" id="MF_00165"/>
    </source>
</evidence>
<dbReference type="EC" id="2.7.4.9" evidence="1"/>
<dbReference type="EMBL" id="AE006470">
    <property type="protein sequence ID" value="AAM72543.1"/>
    <property type="molecule type" value="Genomic_DNA"/>
</dbReference>
<dbReference type="RefSeq" id="NP_662201.1">
    <property type="nucleotide sequence ID" value="NC_002932.3"/>
</dbReference>
<dbReference type="RefSeq" id="WP_010932982.1">
    <property type="nucleotide sequence ID" value="NC_002932.3"/>
</dbReference>
<dbReference type="SMR" id="Q8KCU7"/>
<dbReference type="STRING" id="194439.CT1313"/>
<dbReference type="EnsemblBacteria" id="AAM72543">
    <property type="protein sequence ID" value="AAM72543"/>
    <property type="gene ID" value="CT1313"/>
</dbReference>
<dbReference type="KEGG" id="cte:CT1313"/>
<dbReference type="PATRIC" id="fig|194439.7.peg.1196"/>
<dbReference type="eggNOG" id="COG0125">
    <property type="taxonomic scope" value="Bacteria"/>
</dbReference>
<dbReference type="HOGENOM" id="CLU_049131_0_2_10"/>
<dbReference type="OrthoDB" id="9774907at2"/>
<dbReference type="Proteomes" id="UP000001007">
    <property type="component" value="Chromosome"/>
</dbReference>
<dbReference type="GO" id="GO:0005829">
    <property type="term" value="C:cytosol"/>
    <property type="evidence" value="ECO:0007669"/>
    <property type="project" value="TreeGrafter"/>
</dbReference>
<dbReference type="GO" id="GO:0005524">
    <property type="term" value="F:ATP binding"/>
    <property type="evidence" value="ECO:0007669"/>
    <property type="project" value="UniProtKB-UniRule"/>
</dbReference>
<dbReference type="GO" id="GO:0004798">
    <property type="term" value="F:dTMP kinase activity"/>
    <property type="evidence" value="ECO:0007669"/>
    <property type="project" value="UniProtKB-UniRule"/>
</dbReference>
<dbReference type="GO" id="GO:0006233">
    <property type="term" value="P:dTDP biosynthetic process"/>
    <property type="evidence" value="ECO:0007669"/>
    <property type="project" value="InterPro"/>
</dbReference>
<dbReference type="GO" id="GO:0006235">
    <property type="term" value="P:dTTP biosynthetic process"/>
    <property type="evidence" value="ECO:0007669"/>
    <property type="project" value="UniProtKB-UniRule"/>
</dbReference>
<dbReference type="GO" id="GO:0006227">
    <property type="term" value="P:dUDP biosynthetic process"/>
    <property type="evidence" value="ECO:0007669"/>
    <property type="project" value="TreeGrafter"/>
</dbReference>
<dbReference type="CDD" id="cd01672">
    <property type="entry name" value="TMPK"/>
    <property type="match status" value="1"/>
</dbReference>
<dbReference type="FunFam" id="3.40.50.300:FF:000225">
    <property type="entry name" value="Thymidylate kinase"/>
    <property type="match status" value="1"/>
</dbReference>
<dbReference type="Gene3D" id="3.40.50.300">
    <property type="entry name" value="P-loop containing nucleotide triphosphate hydrolases"/>
    <property type="match status" value="1"/>
</dbReference>
<dbReference type="HAMAP" id="MF_00165">
    <property type="entry name" value="Thymidylate_kinase"/>
    <property type="match status" value="1"/>
</dbReference>
<dbReference type="InterPro" id="IPR027417">
    <property type="entry name" value="P-loop_NTPase"/>
</dbReference>
<dbReference type="InterPro" id="IPR039430">
    <property type="entry name" value="Thymidylate_kin-like_dom"/>
</dbReference>
<dbReference type="InterPro" id="IPR018095">
    <property type="entry name" value="Thymidylate_kin_CS"/>
</dbReference>
<dbReference type="InterPro" id="IPR018094">
    <property type="entry name" value="Thymidylate_kinase"/>
</dbReference>
<dbReference type="NCBIfam" id="TIGR00041">
    <property type="entry name" value="DTMP_kinase"/>
    <property type="match status" value="1"/>
</dbReference>
<dbReference type="PANTHER" id="PTHR10344">
    <property type="entry name" value="THYMIDYLATE KINASE"/>
    <property type="match status" value="1"/>
</dbReference>
<dbReference type="PANTHER" id="PTHR10344:SF4">
    <property type="entry name" value="UMP-CMP KINASE 2, MITOCHONDRIAL"/>
    <property type="match status" value="1"/>
</dbReference>
<dbReference type="Pfam" id="PF02223">
    <property type="entry name" value="Thymidylate_kin"/>
    <property type="match status" value="1"/>
</dbReference>
<dbReference type="SUPFAM" id="SSF52540">
    <property type="entry name" value="P-loop containing nucleoside triphosphate hydrolases"/>
    <property type="match status" value="1"/>
</dbReference>
<dbReference type="PROSITE" id="PS01331">
    <property type="entry name" value="THYMIDYLATE_KINASE"/>
    <property type="match status" value="1"/>
</dbReference>
<sequence length="214" mass="24147">MLISFEGIDGAGKSTQVMKLKRYLQERGREVLALREPGGTPVAEEIRELLLERRNDITPVGELLLFAASRAELVQQVIQPALENDSDVILDRFFDSTTAYQGYGRGLDLDMLAEINRIASCRLVPDVTFYLDLTPEDALMRKFSEKSLPLAFESEELDRMENSGLDFYRRVREGYHKIGGENPNRIIIIDALLSPSEIHRKIISSIDALCTKTA</sequence>
<comment type="function">
    <text evidence="1">Phosphorylation of dTMP to form dTDP in both de novo and salvage pathways of dTTP synthesis.</text>
</comment>
<comment type="catalytic activity">
    <reaction evidence="1">
        <text>dTMP + ATP = dTDP + ADP</text>
        <dbReference type="Rhea" id="RHEA:13517"/>
        <dbReference type="ChEBI" id="CHEBI:30616"/>
        <dbReference type="ChEBI" id="CHEBI:58369"/>
        <dbReference type="ChEBI" id="CHEBI:63528"/>
        <dbReference type="ChEBI" id="CHEBI:456216"/>
        <dbReference type="EC" id="2.7.4.9"/>
    </reaction>
</comment>
<comment type="similarity">
    <text evidence="1">Belongs to the thymidylate kinase family.</text>
</comment>
<accession>Q8KCU7</accession>